<protein>
    <recommendedName>
        <fullName>Cystatin-13</fullName>
    </recommendedName>
    <alternativeName>
        <fullName>Cystatin-T</fullName>
    </alternativeName>
</protein>
<gene>
    <name evidence="9" type="primary">Cst13</name>
    <name evidence="8" type="synonym">Cymg1</name>
</gene>
<dbReference type="EMBL" id="AY600990">
    <property type="protein sequence ID" value="AAT11922.2"/>
    <property type="molecule type" value="mRNA"/>
</dbReference>
<dbReference type="EMBL" id="AK005665">
    <property type="protein sequence ID" value="BAB24175.1"/>
    <property type="molecule type" value="mRNA"/>
</dbReference>
<dbReference type="EMBL" id="BC048681">
    <property type="protein sequence ID" value="AAH48681.1"/>
    <property type="molecule type" value="mRNA"/>
</dbReference>
<dbReference type="CCDS" id="CCDS16849.1"/>
<dbReference type="RefSeq" id="NP_001405634.1">
    <property type="nucleotide sequence ID" value="NM_001418705.1"/>
</dbReference>
<dbReference type="RefSeq" id="NP_081300.1">
    <property type="nucleotide sequence ID" value="NM_027024.4"/>
</dbReference>
<dbReference type="RefSeq" id="XP_011238068.1">
    <property type="nucleotide sequence ID" value="XM_011239766.1"/>
</dbReference>
<dbReference type="SMR" id="Q80ZN5"/>
<dbReference type="FunCoup" id="Q80ZN5">
    <property type="interactions" value="23"/>
</dbReference>
<dbReference type="STRING" id="10090.ENSMUSP00000036005"/>
<dbReference type="MEROPS" id="I25.027"/>
<dbReference type="PaxDb" id="10090-ENSMUSP00000036005"/>
<dbReference type="ProteomicsDB" id="283967"/>
<dbReference type="DNASU" id="69294"/>
<dbReference type="Ensembl" id="ENSMUST00000046589.4">
    <property type="protein sequence ID" value="ENSMUSP00000036005.4"/>
    <property type="gene ID" value="ENSMUSG00000036924.4"/>
</dbReference>
<dbReference type="GeneID" id="69294"/>
<dbReference type="KEGG" id="mmu:69294"/>
<dbReference type="UCSC" id="uc008mtq.1">
    <property type="organism name" value="mouse"/>
</dbReference>
<dbReference type="AGR" id="MGI:1916544"/>
<dbReference type="CTD" id="69294"/>
<dbReference type="MGI" id="MGI:1916544">
    <property type="gene designation" value="Cst13"/>
</dbReference>
<dbReference type="VEuPathDB" id="HostDB:ENSMUSG00000036924"/>
<dbReference type="eggNOG" id="ENOG502T6MU">
    <property type="taxonomic scope" value="Eukaryota"/>
</dbReference>
<dbReference type="GeneTree" id="ENSGT00940000163249"/>
<dbReference type="HOGENOM" id="CLU_118168_2_2_1"/>
<dbReference type="InParanoid" id="Q80ZN5"/>
<dbReference type="OMA" id="ETYVYVQ"/>
<dbReference type="OrthoDB" id="1908104at2759"/>
<dbReference type="PhylomeDB" id="Q80ZN5"/>
<dbReference type="BioGRID-ORCS" id="69294">
    <property type="hits" value="0 hits in 78 CRISPR screens"/>
</dbReference>
<dbReference type="PRO" id="PR:Q80ZN5"/>
<dbReference type="Proteomes" id="UP000000589">
    <property type="component" value="Chromosome 2"/>
</dbReference>
<dbReference type="RNAct" id="Q80ZN5">
    <property type="molecule type" value="protein"/>
</dbReference>
<dbReference type="Bgee" id="ENSMUSG00000036924">
    <property type="expression patterns" value="Expressed in seminiferous tubule of testis and 9 other cell types or tissues"/>
</dbReference>
<dbReference type="GO" id="GO:0005737">
    <property type="term" value="C:cytoplasm"/>
    <property type="evidence" value="ECO:0007669"/>
    <property type="project" value="UniProtKB-SubCell"/>
</dbReference>
<dbReference type="GO" id="GO:0005576">
    <property type="term" value="C:extracellular region"/>
    <property type="evidence" value="ECO:0007669"/>
    <property type="project" value="UniProtKB-SubCell"/>
</dbReference>
<dbReference type="GO" id="GO:0004869">
    <property type="term" value="F:cysteine-type endopeptidase inhibitor activity"/>
    <property type="evidence" value="ECO:0007669"/>
    <property type="project" value="UniProtKB-KW"/>
</dbReference>
<dbReference type="CDD" id="cd00042">
    <property type="entry name" value="CY"/>
    <property type="match status" value="1"/>
</dbReference>
<dbReference type="FunFam" id="3.10.450.10:FF:000004">
    <property type="entry name" value="Cystatin C"/>
    <property type="match status" value="1"/>
</dbReference>
<dbReference type="Gene3D" id="3.10.450.10">
    <property type="match status" value="1"/>
</dbReference>
<dbReference type="InterPro" id="IPR000010">
    <property type="entry name" value="Cystatin_dom"/>
</dbReference>
<dbReference type="InterPro" id="IPR046350">
    <property type="entry name" value="Cystatin_sf"/>
</dbReference>
<dbReference type="InterPro" id="IPR052691">
    <property type="entry name" value="Sperm_Mat_Cystatin"/>
</dbReference>
<dbReference type="PANTHER" id="PTHR47010:SF2">
    <property type="entry name" value="CYSTATIN-13"/>
    <property type="match status" value="1"/>
</dbReference>
<dbReference type="PANTHER" id="PTHR47010">
    <property type="entry name" value="CYSTATIN-8-RELATED"/>
    <property type="match status" value="1"/>
</dbReference>
<dbReference type="Pfam" id="PF00031">
    <property type="entry name" value="Cystatin"/>
    <property type="match status" value="1"/>
</dbReference>
<dbReference type="SMART" id="SM00043">
    <property type="entry name" value="CY"/>
    <property type="match status" value="1"/>
</dbReference>
<dbReference type="SUPFAM" id="SSF54403">
    <property type="entry name" value="Cystatin/monellin"/>
    <property type="match status" value="1"/>
</dbReference>
<comment type="function">
    <text evidence="5">May perform a specialized role during sperm development and maturation.</text>
</comment>
<comment type="subcellular location">
    <subcellularLocation>
        <location evidence="6">Secreted</location>
    </subcellularLocation>
    <subcellularLocation>
        <location evidence="4">Cytoplasm</location>
    </subcellularLocation>
    <text>According to PubMed:15645076 it is cytoplasmic.</text>
</comment>
<comment type="tissue specificity">
    <text evidence="4">Expressed exclusively in testis. Found in spermatagonia, spermatocytes, round spermatids, elongating spermatids and spermatozoa.</text>
</comment>
<comment type="developmental stage">
    <text evidence="4">Expressed only in the adult. Levels are low 1 week postpartum, steadily increase 2 to 5 weeks postpartum, are highest at 7 weeks and then drop to back the levels found at 5 weeks.</text>
</comment>
<comment type="similarity">
    <text evidence="3">Belongs to the cystatin family.</text>
</comment>
<name>CST13_MOUSE</name>
<reference evidence="6 8" key="1">
    <citation type="journal article" date="2005" name="Acta Biochim. Biophys. Sin.">
        <title>Cloning, characterization and primary function study of a novel gene, Cymg1, related to family 2 cystatins.</title>
        <authorList>
            <person name="Xiang Y."/>
            <person name="Nie D.-S."/>
            <person name="Wang J."/>
            <person name="Tan X.-J."/>
            <person name="Deng Y."/>
            <person name="Luo S.-W."/>
            <person name="Lu G.-X."/>
        </authorList>
    </citation>
    <scope>NUCLEOTIDE SEQUENCE [MRNA]</scope>
    <scope>SUBCELLULAR LOCATION</scope>
    <scope>TISSUE SPECIFICITY</scope>
    <scope>DEVELOPMENTAL STAGE</scope>
    <source>
        <tissue evidence="8">Testis</tissue>
    </source>
</reference>
<reference key="2">
    <citation type="journal article" date="2005" name="Science">
        <title>The transcriptional landscape of the mammalian genome.</title>
        <authorList>
            <person name="Carninci P."/>
            <person name="Kasukawa T."/>
            <person name="Katayama S."/>
            <person name="Gough J."/>
            <person name="Frith M.C."/>
            <person name="Maeda N."/>
            <person name="Oyama R."/>
            <person name="Ravasi T."/>
            <person name="Lenhard B."/>
            <person name="Wells C."/>
            <person name="Kodzius R."/>
            <person name="Shimokawa K."/>
            <person name="Bajic V.B."/>
            <person name="Brenner S.E."/>
            <person name="Batalov S."/>
            <person name="Forrest A.R."/>
            <person name="Zavolan M."/>
            <person name="Davis M.J."/>
            <person name="Wilming L.G."/>
            <person name="Aidinis V."/>
            <person name="Allen J.E."/>
            <person name="Ambesi-Impiombato A."/>
            <person name="Apweiler R."/>
            <person name="Aturaliya R.N."/>
            <person name="Bailey T.L."/>
            <person name="Bansal M."/>
            <person name="Baxter L."/>
            <person name="Beisel K.W."/>
            <person name="Bersano T."/>
            <person name="Bono H."/>
            <person name="Chalk A.M."/>
            <person name="Chiu K.P."/>
            <person name="Choudhary V."/>
            <person name="Christoffels A."/>
            <person name="Clutterbuck D.R."/>
            <person name="Crowe M.L."/>
            <person name="Dalla E."/>
            <person name="Dalrymple B.P."/>
            <person name="de Bono B."/>
            <person name="Della Gatta G."/>
            <person name="di Bernardo D."/>
            <person name="Down T."/>
            <person name="Engstrom P."/>
            <person name="Fagiolini M."/>
            <person name="Faulkner G."/>
            <person name="Fletcher C.F."/>
            <person name="Fukushima T."/>
            <person name="Furuno M."/>
            <person name="Futaki S."/>
            <person name="Gariboldi M."/>
            <person name="Georgii-Hemming P."/>
            <person name="Gingeras T.R."/>
            <person name="Gojobori T."/>
            <person name="Green R.E."/>
            <person name="Gustincich S."/>
            <person name="Harbers M."/>
            <person name="Hayashi Y."/>
            <person name="Hensch T.K."/>
            <person name="Hirokawa N."/>
            <person name="Hill D."/>
            <person name="Huminiecki L."/>
            <person name="Iacono M."/>
            <person name="Ikeo K."/>
            <person name="Iwama A."/>
            <person name="Ishikawa T."/>
            <person name="Jakt M."/>
            <person name="Kanapin A."/>
            <person name="Katoh M."/>
            <person name="Kawasawa Y."/>
            <person name="Kelso J."/>
            <person name="Kitamura H."/>
            <person name="Kitano H."/>
            <person name="Kollias G."/>
            <person name="Krishnan S.P."/>
            <person name="Kruger A."/>
            <person name="Kummerfeld S.K."/>
            <person name="Kurochkin I.V."/>
            <person name="Lareau L.F."/>
            <person name="Lazarevic D."/>
            <person name="Lipovich L."/>
            <person name="Liu J."/>
            <person name="Liuni S."/>
            <person name="McWilliam S."/>
            <person name="Madan Babu M."/>
            <person name="Madera M."/>
            <person name="Marchionni L."/>
            <person name="Matsuda H."/>
            <person name="Matsuzawa S."/>
            <person name="Miki H."/>
            <person name="Mignone F."/>
            <person name="Miyake S."/>
            <person name="Morris K."/>
            <person name="Mottagui-Tabar S."/>
            <person name="Mulder N."/>
            <person name="Nakano N."/>
            <person name="Nakauchi H."/>
            <person name="Ng P."/>
            <person name="Nilsson R."/>
            <person name="Nishiguchi S."/>
            <person name="Nishikawa S."/>
            <person name="Nori F."/>
            <person name="Ohara O."/>
            <person name="Okazaki Y."/>
            <person name="Orlando V."/>
            <person name="Pang K.C."/>
            <person name="Pavan W.J."/>
            <person name="Pavesi G."/>
            <person name="Pesole G."/>
            <person name="Petrovsky N."/>
            <person name="Piazza S."/>
            <person name="Reed J."/>
            <person name="Reid J.F."/>
            <person name="Ring B.Z."/>
            <person name="Ringwald M."/>
            <person name="Rost B."/>
            <person name="Ruan Y."/>
            <person name="Salzberg S.L."/>
            <person name="Sandelin A."/>
            <person name="Schneider C."/>
            <person name="Schoenbach C."/>
            <person name="Sekiguchi K."/>
            <person name="Semple C.A."/>
            <person name="Seno S."/>
            <person name="Sessa L."/>
            <person name="Sheng Y."/>
            <person name="Shibata Y."/>
            <person name="Shimada H."/>
            <person name="Shimada K."/>
            <person name="Silva D."/>
            <person name="Sinclair B."/>
            <person name="Sperling S."/>
            <person name="Stupka E."/>
            <person name="Sugiura K."/>
            <person name="Sultana R."/>
            <person name="Takenaka Y."/>
            <person name="Taki K."/>
            <person name="Tammoja K."/>
            <person name="Tan S.L."/>
            <person name="Tang S."/>
            <person name="Taylor M.S."/>
            <person name="Tegner J."/>
            <person name="Teichmann S.A."/>
            <person name="Ueda H.R."/>
            <person name="van Nimwegen E."/>
            <person name="Verardo R."/>
            <person name="Wei C.L."/>
            <person name="Yagi K."/>
            <person name="Yamanishi H."/>
            <person name="Zabarovsky E."/>
            <person name="Zhu S."/>
            <person name="Zimmer A."/>
            <person name="Hide W."/>
            <person name="Bult C."/>
            <person name="Grimmond S.M."/>
            <person name="Teasdale R.D."/>
            <person name="Liu E.T."/>
            <person name="Brusic V."/>
            <person name="Quackenbush J."/>
            <person name="Wahlestedt C."/>
            <person name="Mattick J.S."/>
            <person name="Hume D.A."/>
            <person name="Kai C."/>
            <person name="Sasaki D."/>
            <person name="Tomaru Y."/>
            <person name="Fukuda S."/>
            <person name="Kanamori-Katayama M."/>
            <person name="Suzuki M."/>
            <person name="Aoki J."/>
            <person name="Arakawa T."/>
            <person name="Iida J."/>
            <person name="Imamura K."/>
            <person name="Itoh M."/>
            <person name="Kato T."/>
            <person name="Kawaji H."/>
            <person name="Kawagashira N."/>
            <person name="Kawashima T."/>
            <person name="Kojima M."/>
            <person name="Kondo S."/>
            <person name="Konno H."/>
            <person name="Nakano K."/>
            <person name="Ninomiya N."/>
            <person name="Nishio T."/>
            <person name="Okada M."/>
            <person name="Plessy C."/>
            <person name="Shibata K."/>
            <person name="Shiraki T."/>
            <person name="Suzuki S."/>
            <person name="Tagami M."/>
            <person name="Waki K."/>
            <person name="Watahiki A."/>
            <person name="Okamura-Oho Y."/>
            <person name="Suzuki H."/>
            <person name="Kawai J."/>
            <person name="Hayashizaki Y."/>
        </authorList>
    </citation>
    <scope>NUCLEOTIDE SEQUENCE [LARGE SCALE MRNA]</scope>
    <source>
        <strain>C57BL/6J</strain>
        <tissue>Testis</tissue>
    </source>
</reference>
<reference evidence="7" key="3">
    <citation type="journal article" date="2004" name="Genome Res.">
        <title>The status, quality, and expansion of the NIH full-length cDNA project: the Mammalian Gene Collection (MGC).</title>
        <authorList>
            <consortium name="The MGC Project Team"/>
        </authorList>
    </citation>
    <scope>NUCLEOTIDE SEQUENCE [LARGE SCALE MRNA]</scope>
    <source>
        <tissue evidence="7">Testis</tissue>
    </source>
</reference>
<reference key="4">
    <citation type="journal article" date="2010" name="Cell">
        <title>A tissue-specific atlas of mouse protein phosphorylation and expression.</title>
        <authorList>
            <person name="Huttlin E.L."/>
            <person name="Jedrychowski M.P."/>
            <person name="Elias J.E."/>
            <person name="Goswami T."/>
            <person name="Rad R."/>
            <person name="Beausoleil S.A."/>
            <person name="Villen J."/>
            <person name="Haas W."/>
            <person name="Sowa M.E."/>
            <person name="Gygi S.P."/>
        </authorList>
    </citation>
    <scope>IDENTIFICATION BY MASS SPECTROMETRY [LARGE SCALE ANALYSIS]</scope>
    <source>
        <tissue>Testis</tissue>
    </source>
</reference>
<sequence length="141" mass="16825">MARFLQTLLFLVIMVEFVSRRVEAWGSPQIVRPFEDIPKSYVYVQHALWYAMKEYNKASNDLYNFRVVDILKSQEQITDSLEYYLEVNIARTMCKKIAGDNENCLFQQDPKMKKMVFCIFIVSSKPWKFELKMLKKQCKDI</sequence>
<accession>Q80ZN5</accession>
<accession>Q9DAP1</accession>
<evidence type="ECO:0000250" key="1"/>
<evidence type="ECO:0000250" key="2">
    <source>
        <dbReference type="UniProtKB" id="P01034"/>
    </source>
</evidence>
<evidence type="ECO:0000255" key="3"/>
<evidence type="ECO:0000269" key="4">
    <source>
    </source>
</evidence>
<evidence type="ECO:0000303" key="5">
    <source>
    </source>
</evidence>
<evidence type="ECO:0000305" key="6"/>
<evidence type="ECO:0000312" key="7">
    <source>
        <dbReference type="EMBL" id="AAH48681.1"/>
    </source>
</evidence>
<evidence type="ECO:0000312" key="8">
    <source>
        <dbReference type="EMBL" id="AAT11922.2"/>
    </source>
</evidence>
<evidence type="ECO:0000312" key="9">
    <source>
        <dbReference type="MGI" id="MGI:1916544"/>
    </source>
</evidence>
<feature type="signal peptide" evidence="3">
    <location>
        <begin position="1"/>
        <end position="24"/>
    </location>
</feature>
<feature type="chain" id="PRO_0000006661" description="Cystatin-13" evidence="3">
    <location>
        <begin position="25"/>
        <end position="141"/>
    </location>
</feature>
<feature type="region of interest" description="Secondary area of contact" evidence="1 6">
    <location>
        <begin position="76"/>
        <end position="80"/>
    </location>
</feature>
<feature type="site" description="Reactive site" evidence="1 6">
    <location>
        <position position="26"/>
    </location>
</feature>
<feature type="disulfide bond" evidence="2">
    <location>
        <begin position="94"/>
        <end position="104"/>
    </location>
</feature>
<feature type="disulfide bond" evidence="2">
    <location>
        <begin position="118"/>
        <end position="138"/>
    </location>
</feature>
<feature type="sequence conflict" description="In Ref. 2; BAB24175." evidence="6" ref="2">
    <original>I</original>
    <variation>V</variation>
    <location>
        <position position="97"/>
    </location>
</feature>
<proteinExistence type="evidence at protein level"/>
<keyword id="KW-0963">Cytoplasm</keyword>
<keyword id="KW-1015">Disulfide bond</keyword>
<keyword id="KW-0646">Protease inhibitor</keyword>
<keyword id="KW-1185">Reference proteome</keyword>
<keyword id="KW-0964">Secreted</keyword>
<keyword id="KW-0732">Signal</keyword>
<keyword id="KW-0789">Thiol protease inhibitor</keyword>
<organism>
    <name type="scientific">Mus musculus</name>
    <name type="common">Mouse</name>
    <dbReference type="NCBI Taxonomy" id="10090"/>
    <lineage>
        <taxon>Eukaryota</taxon>
        <taxon>Metazoa</taxon>
        <taxon>Chordata</taxon>
        <taxon>Craniata</taxon>
        <taxon>Vertebrata</taxon>
        <taxon>Euteleostomi</taxon>
        <taxon>Mammalia</taxon>
        <taxon>Eutheria</taxon>
        <taxon>Euarchontoglires</taxon>
        <taxon>Glires</taxon>
        <taxon>Rodentia</taxon>
        <taxon>Myomorpha</taxon>
        <taxon>Muroidea</taxon>
        <taxon>Muridae</taxon>
        <taxon>Murinae</taxon>
        <taxon>Mus</taxon>
        <taxon>Mus</taxon>
    </lineage>
</organism>